<proteinExistence type="evidence at transcript level"/>
<keyword id="KW-0375">Hydrogen ion transport</keyword>
<keyword id="KW-0406">Ion transport</keyword>
<keyword id="KW-1185">Reference proteome</keyword>
<keyword id="KW-0813">Transport</keyword>
<name>VATB1_GOSHI</name>
<protein>
    <recommendedName>
        <fullName>V-type proton ATPase subunit B 1</fullName>
        <shortName>V-ATPase subunit B 1</shortName>
    </recommendedName>
    <alternativeName>
        <fullName>Vacuolar proton pump subunit B 1</fullName>
    </alternativeName>
</protein>
<reference key="1">
    <citation type="journal article" date="1994" name="Plant Physiol.">
        <title>Isolation of multiple cDNAs encoding the vacuolar H(+)-ATPase subunit B from developing cotton (Gossypium hirsutum L.) ovules.</title>
        <authorList>
            <person name="Wan C.Y."/>
            <person name="Wilkins T.A."/>
        </authorList>
    </citation>
    <scope>NUCLEOTIDE SEQUENCE [MRNA]</scope>
    <source>
        <strain>cv. Acala SJ2</strain>
        <tissue>Ovule</tissue>
    </source>
</reference>
<organism>
    <name type="scientific">Gossypium hirsutum</name>
    <name type="common">Upland cotton</name>
    <name type="synonym">Gossypium mexicanum</name>
    <dbReference type="NCBI Taxonomy" id="3635"/>
    <lineage>
        <taxon>Eukaryota</taxon>
        <taxon>Viridiplantae</taxon>
        <taxon>Streptophyta</taxon>
        <taxon>Embryophyta</taxon>
        <taxon>Tracheophyta</taxon>
        <taxon>Spermatophyta</taxon>
        <taxon>Magnoliopsida</taxon>
        <taxon>eudicotyledons</taxon>
        <taxon>Gunneridae</taxon>
        <taxon>Pentapetalae</taxon>
        <taxon>rosids</taxon>
        <taxon>malvids</taxon>
        <taxon>Malvales</taxon>
        <taxon>Malvaceae</taxon>
        <taxon>Malvoideae</taxon>
        <taxon>Gossypium</taxon>
    </lineage>
</organism>
<evidence type="ECO:0000305" key="1"/>
<dbReference type="EMBL" id="U07052">
    <property type="protein sequence ID" value="AAA57549.1"/>
    <property type="molecule type" value="mRNA"/>
</dbReference>
<dbReference type="RefSeq" id="NP_001313705.1">
    <property type="nucleotide sequence ID" value="NM_001326776.1"/>
</dbReference>
<dbReference type="SMR" id="Q43432"/>
<dbReference type="STRING" id="3635.Q43432"/>
<dbReference type="PaxDb" id="3635-Q43432"/>
<dbReference type="GeneID" id="107890851"/>
<dbReference type="KEGG" id="ghi:107890851"/>
<dbReference type="Proteomes" id="UP000189702">
    <property type="component" value="Unplaced"/>
</dbReference>
<dbReference type="GO" id="GO:0033180">
    <property type="term" value="C:proton-transporting V-type ATPase, V1 domain"/>
    <property type="evidence" value="ECO:0007669"/>
    <property type="project" value="InterPro"/>
</dbReference>
<dbReference type="GO" id="GO:0005524">
    <property type="term" value="F:ATP binding"/>
    <property type="evidence" value="ECO:0007669"/>
    <property type="project" value="InterPro"/>
</dbReference>
<dbReference type="GO" id="GO:0046961">
    <property type="term" value="F:proton-transporting ATPase activity, rotational mechanism"/>
    <property type="evidence" value="ECO:0000318"/>
    <property type="project" value="GO_Central"/>
</dbReference>
<dbReference type="GO" id="GO:0046034">
    <property type="term" value="P:ATP metabolic process"/>
    <property type="evidence" value="ECO:0007669"/>
    <property type="project" value="InterPro"/>
</dbReference>
<dbReference type="GO" id="GO:0007035">
    <property type="term" value="P:vacuolar acidification"/>
    <property type="evidence" value="ECO:0000318"/>
    <property type="project" value="GO_Central"/>
</dbReference>
<dbReference type="CDD" id="cd18112">
    <property type="entry name" value="ATP-synt_V_A-type_beta_C"/>
    <property type="match status" value="1"/>
</dbReference>
<dbReference type="CDD" id="cd18118">
    <property type="entry name" value="ATP-synt_V_A-type_beta_N"/>
    <property type="match status" value="1"/>
</dbReference>
<dbReference type="CDD" id="cd01135">
    <property type="entry name" value="V_A-ATPase_B"/>
    <property type="match status" value="1"/>
</dbReference>
<dbReference type="FunFam" id="3.40.50.12240:FF:000001">
    <property type="entry name" value="V-type proton ATPase subunit B, brain"/>
    <property type="match status" value="1"/>
</dbReference>
<dbReference type="Gene3D" id="3.40.50.12240">
    <property type="match status" value="1"/>
</dbReference>
<dbReference type="HAMAP" id="MF_00310">
    <property type="entry name" value="ATP_synth_B_arch"/>
    <property type="match status" value="1"/>
</dbReference>
<dbReference type="InterPro" id="IPR055190">
    <property type="entry name" value="ATP-synt_VA_C"/>
</dbReference>
<dbReference type="InterPro" id="IPR020003">
    <property type="entry name" value="ATPase_a/bsu_AS"/>
</dbReference>
<dbReference type="InterPro" id="IPR004100">
    <property type="entry name" value="ATPase_F1/V1/A1_a/bsu_N"/>
</dbReference>
<dbReference type="InterPro" id="IPR000194">
    <property type="entry name" value="ATPase_F1/V1/A1_a/bsu_nucl-bd"/>
</dbReference>
<dbReference type="InterPro" id="IPR005723">
    <property type="entry name" value="ATPase_V1-cplx_bsu"/>
</dbReference>
<dbReference type="InterPro" id="IPR027417">
    <property type="entry name" value="P-loop_NTPase"/>
</dbReference>
<dbReference type="InterPro" id="IPR022879">
    <property type="entry name" value="V-ATPase_su_B/beta"/>
</dbReference>
<dbReference type="NCBIfam" id="NF003235">
    <property type="entry name" value="PRK04196.1"/>
    <property type="match status" value="1"/>
</dbReference>
<dbReference type="NCBIfam" id="TIGR01040">
    <property type="entry name" value="V-ATPase_V1_B"/>
    <property type="match status" value="1"/>
</dbReference>
<dbReference type="PANTHER" id="PTHR43389">
    <property type="entry name" value="V-TYPE PROTON ATPASE SUBUNIT B"/>
    <property type="match status" value="1"/>
</dbReference>
<dbReference type="PANTHER" id="PTHR43389:SF27">
    <property type="entry name" value="V-TYPE PROTON ATPASE SUBUNIT B1-RELATED"/>
    <property type="match status" value="1"/>
</dbReference>
<dbReference type="Pfam" id="PF00006">
    <property type="entry name" value="ATP-synt_ab"/>
    <property type="match status" value="1"/>
</dbReference>
<dbReference type="Pfam" id="PF02874">
    <property type="entry name" value="ATP-synt_ab_N"/>
    <property type="match status" value="1"/>
</dbReference>
<dbReference type="Pfam" id="PF22919">
    <property type="entry name" value="ATP-synt_VA_C"/>
    <property type="match status" value="1"/>
</dbReference>
<dbReference type="PIRSF" id="PIRSF039114">
    <property type="entry name" value="V-ATPsynth_beta/V-ATPase_B"/>
    <property type="match status" value="1"/>
</dbReference>
<dbReference type="SUPFAM" id="SSF52540">
    <property type="entry name" value="P-loop containing nucleoside triphosphate hydrolases"/>
    <property type="match status" value="1"/>
</dbReference>
<dbReference type="PROSITE" id="PS00152">
    <property type="entry name" value="ATPASE_ALPHA_BETA"/>
    <property type="match status" value="1"/>
</dbReference>
<comment type="function">
    <text>Non-catalytic subunit of the peripheral V1 complex of vacuolar ATPase. V-ATPase is responsible for acidifying a variety of intracellular compartments in eukaryotic cells.</text>
</comment>
<comment type="subunit">
    <text>V-ATPase is a heteromultimeric enzyme composed of a peripheral catalytic V1 complex (main components: subunits A, B, C, D, E, and F) attached to an integral membrane V0 proton pore complex (main component: the proteolipid protein).</text>
</comment>
<comment type="similarity">
    <text evidence="1">Belongs to the ATPase alpha/beta chains family.</text>
</comment>
<accession>Q43432</accession>
<feature type="chain" id="PRO_0000144641" description="V-type proton ATPase subunit B 1">
    <location>
        <begin position="1"/>
        <end position="488"/>
    </location>
</feature>
<sequence>MGMAENTNGMEEGTLEIGMEYRTVSGVAGPLVILDKVKGPKYQEIVNIRLGDGTTRRGQVLEVDGEKAVVQVFEGTSGIDNKYTTVQFTGEVLKTPVSLDMLGRIFNGSGKPIDNGPPILPEAYLDISGSSINPSERTYPEEMIQTGISTIDVMNSIARGQKIPLFSAAGLPHNEIAAQICRQAGLVKRLEKTGDLLEDGEEDNFAIVFAAMGVNMETAQFFKRDFEENGSMERVTLFLNLANDPTIERIITPRIALTTAEYLAYECGKHVLVILTDMSSYADALREVSAAREEVPGRRGYPGYMYTDLATIYERAGRIEGRKGSITQIPILTMPNDDITHPTPDLTGYITEGQIYIDRQLHNRQIYPPINVLPSLSRLMKSAIGEGMTRRDHADVSNQLYANYAIGKDVQAMKAVVGEEALSSEDLLYLEFLDKFERKVVTQGAYDTRNIFQSLDLAWTLLRIFPRELLHRIPAKTHDQYYSRDAGN</sequence>